<comment type="function">
    <text evidence="1">Component of the proteasome core, a large protease complex with broad specificity involved in protein degradation.</text>
</comment>
<comment type="catalytic activity">
    <reaction evidence="1">
        <text>Cleavage of peptide bonds with very broad specificity.</text>
        <dbReference type="EC" id="3.4.25.1"/>
    </reaction>
</comment>
<comment type="activity regulation">
    <text evidence="1">The formation of the proteasomal ATPase PAN-20S proteasome complex, via the docking of the C-termini of PAN into the intersubunit pockets in the alpha-rings, triggers opening of the gate for substrate entry. Interconversion between the open-gate and close-gate conformations leads to a dynamic regulation of the 20S proteasome proteolysis activity.</text>
</comment>
<comment type="subunit">
    <text evidence="1">The 20S proteasome core is composed of 14 alpha and 14 beta subunits that assemble into four stacked heptameric rings, resulting in a barrel-shaped structure. The two inner rings, each composed of seven catalytic beta subunits, are sandwiched by two outer rings, each composed of seven alpha subunits. The catalytic chamber with the active sites is on the inside of the barrel. Has a gated structure, the ends of the cylinder being occluded by the N-termini of the alpha-subunits. Is capped at one or both ends by the proteasome regulatory ATPase, PAN.</text>
</comment>
<comment type="subcellular location">
    <subcellularLocation>
        <location evidence="1">Cytoplasm</location>
    </subcellularLocation>
</comment>
<comment type="similarity">
    <text evidence="1">Belongs to the peptidase T1B family.</text>
</comment>
<sequence length="203" mass="21556">MGEEFQVGATAVGIRAKDGVVLAAEKRVSYGFYTLSTAGKKVFIVNDKLAIASAGIIADMQALAKILKLNARSYELEVKKKPTVKAMAKLLSVVMFSRRFMPFYAEVLVGGVDEEGPHLIVMDPLGSLIEDNYAALGTGAKLAVSLLDASYRPDMTVEEAKKLAVQAVKAAIERDPVSGGGIDLVVVDGGGAREEEVKVQVVI</sequence>
<protein>
    <recommendedName>
        <fullName evidence="1">Proteasome subunit beta 2</fullName>
        <ecNumber evidence="1">3.4.25.1</ecNumber>
    </recommendedName>
    <alternativeName>
        <fullName evidence="1">20S proteasome beta subunit 2</fullName>
    </alternativeName>
    <alternativeName>
        <fullName evidence="1">Proteasome core protein PsmB 2</fullName>
    </alternativeName>
</protein>
<keyword id="KW-0068">Autocatalytic cleavage</keyword>
<keyword id="KW-0963">Cytoplasm</keyword>
<keyword id="KW-0378">Hydrolase</keyword>
<keyword id="KW-0645">Protease</keyword>
<keyword id="KW-0647">Proteasome</keyword>
<keyword id="KW-0888">Threonine protease</keyword>
<keyword id="KW-0865">Zymogen</keyword>
<name>PSB2_PYRNV</name>
<feature type="propeptide" id="PRO_0000397484" description="Removed in mature form; by autocatalysis" evidence="1">
    <location>
        <begin position="1"/>
        <end position="9"/>
    </location>
</feature>
<feature type="chain" id="PRO_0000397485" description="Proteasome subunit beta 2">
    <location>
        <begin position="10"/>
        <end position="203"/>
    </location>
</feature>
<feature type="active site" description="Nucleophile" evidence="1">
    <location>
        <position position="10"/>
    </location>
</feature>
<organism>
    <name type="scientific">Pyrobaculum neutrophilum (strain DSM 2338 / JCM 9278 / NBRC 100436 / V24Sta)</name>
    <name type="common">Thermoproteus neutrophilus</name>
    <dbReference type="NCBI Taxonomy" id="444157"/>
    <lineage>
        <taxon>Archaea</taxon>
        <taxon>Thermoproteota</taxon>
        <taxon>Thermoprotei</taxon>
        <taxon>Thermoproteales</taxon>
        <taxon>Thermoproteaceae</taxon>
        <taxon>Pyrobaculum</taxon>
    </lineage>
</organism>
<dbReference type="EC" id="3.4.25.1" evidence="1"/>
<dbReference type="EMBL" id="CP001014">
    <property type="protein sequence ID" value="ACB39853.1"/>
    <property type="molecule type" value="Genomic_DNA"/>
</dbReference>
<dbReference type="RefSeq" id="WP_012350273.1">
    <property type="nucleotide sequence ID" value="NC_010525.1"/>
</dbReference>
<dbReference type="SMR" id="B1YDJ0"/>
<dbReference type="STRING" id="444157.Tneu_0916"/>
<dbReference type="GeneID" id="6164563"/>
<dbReference type="KEGG" id="tne:Tneu_0916"/>
<dbReference type="eggNOG" id="arCOG00970">
    <property type="taxonomic scope" value="Archaea"/>
</dbReference>
<dbReference type="HOGENOM" id="CLU_035750_7_2_2"/>
<dbReference type="OrthoDB" id="6330at2157"/>
<dbReference type="Proteomes" id="UP000001694">
    <property type="component" value="Chromosome"/>
</dbReference>
<dbReference type="GO" id="GO:0005737">
    <property type="term" value="C:cytoplasm"/>
    <property type="evidence" value="ECO:0007669"/>
    <property type="project" value="UniProtKB-SubCell"/>
</dbReference>
<dbReference type="GO" id="GO:0019774">
    <property type="term" value="C:proteasome core complex, beta-subunit complex"/>
    <property type="evidence" value="ECO:0007669"/>
    <property type="project" value="UniProtKB-UniRule"/>
</dbReference>
<dbReference type="GO" id="GO:0004298">
    <property type="term" value="F:threonine-type endopeptidase activity"/>
    <property type="evidence" value="ECO:0007669"/>
    <property type="project" value="UniProtKB-UniRule"/>
</dbReference>
<dbReference type="GO" id="GO:0010498">
    <property type="term" value="P:proteasomal protein catabolic process"/>
    <property type="evidence" value="ECO:0007669"/>
    <property type="project" value="UniProtKB-UniRule"/>
</dbReference>
<dbReference type="Gene3D" id="3.60.20.10">
    <property type="entry name" value="Glutamine Phosphoribosylpyrophosphate, subunit 1, domain 1"/>
    <property type="match status" value="1"/>
</dbReference>
<dbReference type="HAMAP" id="MF_02113_A">
    <property type="entry name" value="Proteasome_B_A"/>
    <property type="match status" value="1"/>
</dbReference>
<dbReference type="InterPro" id="IPR029055">
    <property type="entry name" value="Ntn_hydrolases_N"/>
</dbReference>
<dbReference type="InterPro" id="IPR019983">
    <property type="entry name" value="Pept_T1A_Psome_bsu_arc"/>
</dbReference>
<dbReference type="InterPro" id="IPR000243">
    <property type="entry name" value="Pept_T1A_subB"/>
</dbReference>
<dbReference type="InterPro" id="IPR016050">
    <property type="entry name" value="Proteasome_bsu_CS"/>
</dbReference>
<dbReference type="InterPro" id="IPR001353">
    <property type="entry name" value="Proteasome_sua/b"/>
</dbReference>
<dbReference type="InterPro" id="IPR023333">
    <property type="entry name" value="Proteasome_suB-type"/>
</dbReference>
<dbReference type="NCBIfam" id="TIGR03634">
    <property type="entry name" value="arc_protsome_B"/>
    <property type="match status" value="1"/>
</dbReference>
<dbReference type="PANTHER" id="PTHR32194:SF0">
    <property type="entry name" value="ATP-DEPENDENT PROTEASE SUBUNIT HSLV"/>
    <property type="match status" value="1"/>
</dbReference>
<dbReference type="PANTHER" id="PTHR32194">
    <property type="entry name" value="METALLOPROTEASE TLDD"/>
    <property type="match status" value="1"/>
</dbReference>
<dbReference type="Pfam" id="PF00227">
    <property type="entry name" value="Proteasome"/>
    <property type="match status" value="1"/>
</dbReference>
<dbReference type="PRINTS" id="PR00141">
    <property type="entry name" value="PROTEASOME"/>
</dbReference>
<dbReference type="SUPFAM" id="SSF56235">
    <property type="entry name" value="N-terminal nucleophile aminohydrolases (Ntn hydrolases)"/>
    <property type="match status" value="1"/>
</dbReference>
<dbReference type="PROSITE" id="PS00854">
    <property type="entry name" value="PROTEASOME_BETA_1"/>
    <property type="match status" value="1"/>
</dbReference>
<dbReference type="PROSITE" id="PS51476">
    <property type="entry name" value="PROTEASOME_BETA_2"/>
    <property type="match status" value="1"/>
</dbReference>
<evidence type="ECO:0000255" key="1">
    <source>
        <dbReference type="HAMAP-Rule" id="MF_02113"/>
    </source>
</evidence>
<accession>B1YDJ0</accession>
<gene>
    <name evidence="1" type="primary">psmB2</name>
    <name type="ordered locus">Tneu_0916</name>
</gene>
<proteinExistence type="inferred from homology"/>
<reference key="1">
    <citation type="submission" date="2008-03" db="EMBL/GenBank/DDBJ databases">
        <title>Complete sequence of Thermoproteus neutrophilus V24Sta.</title>
        <authorList>
            <consortium name="US DOE Joint Genome Institute"/>
            <person name="Copeland A."/>
            <person name="Lucas S."/>
            <person name="Lapidus A."/>
            <person name="Glavina del Rio T."/>
            <person name="Dalin E."/>
            <person name="Tice H."/>
            <person name="Bruce D."/>
            <person name="Goodwin L."/>
            <person name="Pitluck S."/>
            <person name="Sims D."/>
            <person name="Brettin T."/>
            <person name="Detter J.C."/>
            <person name="Han C."/>
            <person name="Kuske C.R."/>
            <person name="Schmutz J."/>
            <person name="Larimer F."/>
            <person name="Land M."/>
            <person name="Hauser L."/>
            <person name="Kyrpides N."/>
            <person name="Mikhailova N."/>
            <person name="Biddle J.F."/>
            <person name="Zhang Z."/>
            <person name="Fitz-Gibbon S.T."/>
            <person name="Lowe T.M."/>
            <person name="Saltikov C."/>
            <person name="House C.H."/>
            <person name="Richardson P."/>
        </authorList>
    </citation>
    <scope>NUCLEOTIDE SEQUENCE [LARGE SCALE GENOMIC DNA]</scope>
    <source>
        <strain>DSM 2338 / JCM 9278 / NBRC 100436 / V24Sta</strain>
    </source>
</reference>